<name>TBP_DICDI</name>
<protein>
    <recommendedName>
        <fullName>TATA-box-binding protein</fullName>
    </recommendedName>
    <alternativeName>
        <fullName>TATA sequence-binding protein</fullName>
        <shortName>TBP</shortName>
    </alternativeName>
    <alternativeName>
        <fullName>TATA-binding factor</fullName>
    </alternativeName>
    <alternativeName>
        <fullName>TATA-box factor</fullName>
    </alternativeName>
    <alternativeName>
        <fullName>Transcription initiation factor TFIID TBP subunit</fullName>
    </alternativeName>
</protein>
<accession>P26355</accession>
<accession>Q552P8</accession>
<accession>Q75K25</accession>
<gene>
    <name type="primary">tbpA</name>
    <name type="synonym">tfdA</name>
    <name type="ORF">DDB_G0275617</name>
</gene>
<proteinExistence type="evidence at transcript level"/>
<feature type="chain" id="PRO_0000153971" description="TATA-box-binding protein">
    <location>
        <begin position="1"/>
        <end position="205"/>
    </location>
</feature>
<feature type="repeat" description="1">
    <location>
        <begin position="27"/>
        <end position="103"/>
    </location>
</feature>
<feature type="repeat" description="2">
    <location>
        <begin position="117"/>
        <end position="194"/>
    </location>
</feature>
<feature type="sequence conflict" description="In Ref. 1; AAA33256." evidence="1" ref="1">
    <original>D</original>
    <variation>Y</variation>
    <location>
        <position position="41"/>
    </location>
</feature>
<feature type="sequence conflict" description="In Ref. 1; AAA33256." evidence="1" ref="1">
    <original>V</original>
    <variation>L</variation>
    <location>
        <position position="163"/>
    </location>
</feature>
<feature type="sequence conflict" description="In Ref. 1; AAA33256." evidence="1" ref="1">
    <original>E</original>
    <variation>Y</variation>
    <location>
        <position position="182"/>
    </location>
</feature>
<keyword id="KW-0238">DNA-binding</keyword>
<keyword id="KW-0539">Nucleus</keyword>
<keyword id="KW-1185">Reference proteome</keyword>
<keyword id="KW-0677">Repeat</keyword>
<keyword id="KW-0804">Transcription</keyword>
<comment type="function">
    <text>General transcription factor that functions at the core of the DNA-binding multiprotein factor TFIID. Binding of TFIID to the TATA box is the initial transcriptional step of the pre-initiation complex (PIC), playing a role in the activation of eukaryotic genes transcribed by RNA polymerase II.</text>
</comment>
<comment type="subunit">
    <text>Belongs to the TFIID complex together with the TBP-associated factors (TAFs). Binds DNA as monomer.</text>
</comment>
<comment type="subcellular location">
    <subcellularLocation>
        <location>Nucleus</location>
    </subcellularLocation>
</comment>
<comment type="similarity">
    <text evidence="1">Belongs to the TBP family.</text>
</comment>
<sequence>MSTATTTSTPAQNVDLSKHPSGIIPTLQNIVSTVNMATELDLKAIALGARNAEYNPKRFAAVIMRIREPKTTALIFKSGKMVCTGAKSEDASRFAARKYARIIQKLDFPARFTDFKIQNIVGSCDVKFPIKLELLHNAHTSFTNYEPEIFPGLIYKMIQPKVVLLIFVSGKIVLTGAKVREEIYEAFENIYPVLSAFKKVNAITQ</sequence>
<organism>
    <name type="scientific">Dictyostelium discoideum</name>
    <name type="common">Social amoeba</name>
    <dbReference type="NCBI Taxonomy" id="44689"/>
    <lineage>
        <taxon>Eukaryota</taxon>
        <taxon>Amoebozoa</taxon>
        <taxon>Evosea</taxon>
        <taxon>Eumycetozoa</taxon>
        <taxon>Dictyostelia</taxon>
        <taxon>Dictyosteliales</taxon>
        <taxon>Dictyosteliaceae</taxon>
        <taxon>Dictyostelium</taxon>
    </lineage>
</organism>
<evidence type="ECO:0000305" key="1"/>
<dbReference type="EMBL" id="M64861">
    <property type="protein sequence ID" value="AAA33256.1"/>
    <property type="molecule type" value="mRNA"/>
</dbReference>
<dbReference type="EMBL" id="AAFI02000013">
    <property type="protein sequence ID" value="EAL69559.1"/>
    <property type="molecule type" value="Genomic_DNA"/>
</dbReference>
<dbReference type="RefSeq" id="XP_643633.1">
    <property type="nucleotide sequence ID" value="XM_638541.1"/>
</dbReference>
<dbReference type="SMR" id="P26355"/>
<dbReference type="FunCoup" id="P26355">
    <property type="interactions" value="809"/>
</dbReference>
<dbReference type="STRING" id="44689.P26355"/>
<dbReference type="PaxDb" id="44689-DDB0185066"/>
<dbReference type="EnsemblProtists" id="EAL69559">
    <property type="protein sequence ID" value="EAL69559"/>
    <property type="gene ID" value="DDB_G0275617"/>
</dbReference>
<dbReference type="GeneID" id="8620220"/>
<dbReference type="KEGG" id="ddi:DDB_G0275617"/>
<dbReference type="dictyBase" id="DDB_G0275617">
    <property type="gene designation" value="tbpA"/>
</dbReference>
<dbReference type="VEuPathDB" id="AmoebaDB:DDB_G0275617"/>
<dbReference type="eggNOG" id="KOG3302">
    <property type="taxonomic scope" value="Eukaryota"/>
</dbReference>
<dbReference type="HOGENOM" id="CLU_060161_4_2_1"/>
<dbReference type="InParanoid" id="P26355"/>
<dbReference type="OMA" id="NCEYEPE"/>
<dbReference type="PhylomeDB" id="P26355"/>
<dbReference type="Reactome" id="R-DDI-674695">
    <property type="pathway name" value="RNA Polymerase II Pre-transcription Events"/>
</dbReference>
<dbReference type="Reactome" id="R-DDI-6807505">
    <property type="pathway name" value="RNA polymerase II transcribes snRNA genes"/>
</dbReference>
<dbReference type="Reactome" id="R-DDI-73772">
    <property type="pathway name" value="RNA Polymerase I Promoter Escape"/>
</dbReference>
<dbReference type="Reactome" id="R-DDI-73776">
    <property type="pathway name" value="RNA Polymerase II Promoter Escape"/>
</dbReference>
<dbReference type="Reactome" id="R-DDI-73779">
    <property type="pathway name" value="RNA Polymerase II Transcription Pre-Initiation And Promoter Opening"/>
</dbReference>
<dbReference type="Reactome" id="R-DDI-75953">
    <property type="pathway name" value="RNA Polymerase II Transcription Initiation"/>
</dbReference>
<dbReference type="Reactome" id="R-DDI-76042">
    <property type="pathway name" value="RNA Polymerase II Transcription Initiation And Promoter Clearance"/>
</dbReference>
<dbReference type="Reactome" id="R-DDI-76061">
    <property type="pathway name" value="RNA Polymerase III Transcription Initiation From Type 1 Promoter"/>
</dbReference>
<dbReference type="Reactome" id="R-DDI-76066">
    <property type="pathway name" value="RNA Polymerase III Transcription Initiation From Type 2 Promoter"/>
</dbReference>
<dbReference type="Reactome" id="R-DDI-9018519">
    <property type="pathway name" value="Estrogen-dependent gene expression"/>
</dbReference>
<dbReference type="PRO" id="PR:P26355"/>
<dbReference type="Proteomes" id="UP000002195">
    <property type="component" value="Chromosome 2"/>
</dbReference>
<dbReference type="GO" id="GO:0005634">
    <property type="term" value="C:nucleus"/>
    <property type="evidence" value="ECO:0000305"/>
    <property type="project" value="dictyBase"/>
</dbReference>
<dbReference type="GO" id="GO:0000126">
    <property type="term" value="C:transcription factor TFIIIB complex"/>
    <property type="evidence" value="ECO:0000314"/>
    <property type="project" value="dictyBase"/>
</dbReference>
<dbReference type="GO" id="GO:0003677">
    <property type="term" value="F:DNA binding"/>
    <property type="evidence" value="ECO:0007669"/>
    <property type="project" value="UniProtKB-KW"/>
</dbReference>
<dbReference type="GO" id="GO:0016251">
    <property type="term" value="F:RNA polymerase II general transcription initiation factor activity"/>
    <property type="evidence" value="ECO:0000318"/>
    <property type="project" value="GO_Central"/>
</dbReference>
<dbReference type="GO" id="GO:0006352">
    <property type="term" value="P:DNA-templated transcription initiation"/>
    <property type="evidence" value="ECO:0000318"/>
    <property type="project" value="GO_Central"/>
</dbReference>
<dbReference type="GO" id="GO:0006366">
    <property type="term" value="P:transcription by RNA polymerase II"/>
    <property type="evidence" value="ECO:0000250"/>
    <property type="project" value="dictyBase"/>
</dbReference>
<dbReference type="GO" id="GO:0006383">
    <property type="term" value="P:transcription by RNA polymerase III"/>
    <property type="evidence" value="ECO:0000250"/>
    <property type="project" value="dictyBase"/>
</dbReference>
<dbReference type="GO" id="GO:0006384">
    <property type="term" value="P:transcription initiation at RNA polymerase III promoter"/>
    <property type="evidence" value="ECO:0000250"/>
    <property type="project" value="dictyBase"/>
</dbReference>
<dbReference type="CDD" id="cd04516">
    <property type="entry name" value="TBP_eukaryotes"/>
    <property type="match status" value="1"/>
</dbReference>
<dbReference type="FunFam" id="3.30.310.10:FF:000001">
    <property type="entry name" value="TATA-box-binding protein 2"/>
    <property type="match status" value="1"/>
</dbReference>
<dbReference type="FunFam" id="3.30.310.10:FF:000002">
    <property type="entry name" value="TATA-box-binding protein 2"/>
    <property type="match status" value="1"/>
</dbReference>
<dbReference type="Gene3D" id="3.30.310.10">
    <property type="entry name" value="TATA-Binding Protein"/>
    <property type="match status" value="2"/>
</dbReference>
<dbReference type="HAMAP" id="MF_00408">
    <property type="entry name" value="TATA_bind_prot_arch"/>
    <property type="match status" value="1"/>
</dbReference>
<dbReference type="InterPro" id="IPR000814">
    <property type="entry name" value="TBP"/>
</dbReference>
<dbReference type="InterPro" id="IPR030491">
    <property type="entry name" value="TBP_CS"/>
</dbReference>
<dbReference type="InterPro" id="IPR012295">
    <property type="entry name" value="TBP_dom_sf"/>
</dbReference>
<dbReference type="InterPro" id="IPR033710">
    <property type="entry name" value="TBP_eukaryotic"/>
</dbReference>
<dbReference type="PANTHER" id="PTHR10126">
    <property type="entry name" value="TATA-BOX BINDING PROTEIN"/>
    <property type="match status" value="1"/>
</dbReference>
<dbReference type="Pfam" id="PF00352">
    <property type="entry name" value="TBP"/>
    <property type="match status" value="2"/>
</dbReference>
<dbReference type="PRINTS" id="PR00686">
    <property type="entry name" value="TIFACTORIID"/>
</dbReference>
<dbReference type="SUPFAM" id="SSF55945">
    <property type="entry name" value="TATA-box binding protein-like"/>
    <property type="match status" value="2"/>
</dbReference>
<dbReference type="PROSITE" id="PS00351">
    <property type="entry name" value="TFIID"/>
    <property type="match status" value="2"/>
</dbReference>
<reference key="1">
    <citation type="submission" date="1991-05" db="EMBL/GenBank/DDBJ databases">
        <title>Dictyostelium TFIID mRNA is developmentally regulated.</title>
        <authorList>
            <person name="Blume J.E."/>
            <person name="Shaw D.R."/>
            <person name="Ennis H.L."/>
        </authorList>
    </citation>
    <scope>NUCLEOTIDE SEQUENCE [MRNA]</scope>
    <source>
        <strain>AX4</strain>
    </source>
</reference>
<reference key="2">
    <citation type="journal article" date="2002" name="Nature">
        <title>Sequence and analysis of chromosome 2 of Dictyostelium discoideum.</title>
        <authorList>
            <person name="Gloeckner G."/>
            <person name="Eichinger L."/>
            <person name="Szafranski K."/>
            <person name="Pachebat J.A."/>
            <person name="Bankier A.T."/>
            <person name="Dear P.H."/>
            <person name="Lehmann R."/>
            <person name="Baumgart C."/>
            <person name="Parra G."/>
            <person name="Abril J.F."/>
            <person name="Guigo R."/>
            <person name="Kumpf K."/>
            <person name="Tunggal B."/>
            <person name="Cox E.C."/>
            <person name="Quail M.A."/>
            <person name="Platzer M."/>
            <person name="Rosenthal A."/>
            <person name="Noegel A.A."/>
        </authorList>
    </citation>
    <scope>NUCLEOTIDE SEQUENCE [LARGE SCALE GENOMIC DNA]</scope>
    <source>
        <strain>AX4</strain>
    </source>
</reference>
<reference key="3">
    <citation type="journal article" date="2005" name="Nature">
        <title>The genome of the social amoeba Dictyostelium discoideum.</title>
        <authorList>
            <person name="Eichinger L."/>
            <person name="Pachebat J.A."/>
            <person name="Gloeckner G."/>
            <person name="Rajandream M.A."/>
            <person name="Sucgang R."/>
            <person name="Berriman M."/>
            <person name="Song J."/>
            <person name="Olsen R."/>
            <person name="Szafranski K."/>
            <person name="Xu Q."/>
            <person name="Tunggal B."/>
            <person name="Kummerfeld S."/>
            <person name="Madera M."/>
            <person name="Konfortov B.A."/>
            <person name="Rivero F."/>
            <person name="Bankier A.T."/>
            <person name="Lehmann R."/>
            <person name="Hamlin N."/>
            <person name="Davies R."/>
            <person name="Gaudet P."/>
            <person name="Fey P."/>
            <person name="Pilcher K."/>
            <person name="Chen G."/>
            <person name="Saunders D."/>
            <person name="Sodergren E.J."/>
            <person name="Davis P."/>
            <person name="Kerhornou A."/>
            <person name="Nie X."/>
            <person name="Hall N."/>
            <person name="Anjard C."/>
            <person name="Hemphill L."/>
            <person name="Bason N."/>
            <person name="Farbrother P."/>
            <person name="Desany B."/>
            <person name="Just E."/>
            <person name="Morio T."/>
            <person name="Rost R."/>
            <person name="Churcher C.M."/>
            <person name="Cooper J."/>
            <person name="Haydock S."/>
            <person name="van Driessche N."/>
            <person name="Cronin A."/>
            <person name="Goodhead I."/>
            <person name="Muzny D.M."/>
            <person name="Mourier T."/>
            <person name="Pain A."/>
            <person name="Lu M."/>
            <person name="Harper D."/>
            <person name="Lindsay R."/>
            <person name="Hauser H."/>
            <person name="James K.D."/>
            <person name="Quiles M."/>
            <person name="Madan Babu M."/>
            <person name="Saito T."/>
            <person name="Buchrieser C."/>
            <person name="Wardroper A."/>
            <person name="Felder M."/>
            <person name="Thangavelu M."/>
            <person name="Johnson D."/>
            <person name="Knights A."/>
            <person name="Loulseged H."/>
            <person name="Mungall K.L."/>
            <person name="Oliver K."/>
            <person name="Price C."/>
            <person name="Quail M.A."/>
            <person name="Urushihara H."/>
            <person name="Hernandez J."/>
            <person name="Rabbinowitsch E."/>
            <person name="Steffen D."/>
            <person name="Sanders M."/>
            <person name="Ma J."/>
            <person name="Kohara Y."/>
            <person name="Sharp S."/>
            <person name="Simmonds M.N."/>
            <person name="Spiegler S."/>
            <person name="Tivey A."/>
            <person name="Sugano S."/>
            <person name="White B."/>
            <person name="Walker D."/>
            <person name="Woodward J.R."/>
            <person name="Winckler T."/>
            <person name="Tanaka Y."/>
            <person name="Shaulsky G."/>
            <person name="Schleicher M."/>
            <person name="Weinstock G.M."/>
            <person name="Rosenthal A."/>
            <person name="Cox E.C."/>
            <person name="Chisholm R.L."/>
            <person name="Gibbs R.A."/>
            <person name="Loomis W.F."/>
            <person name="Platzer M."/>
            <person name="Kay R.R."/>
            <person name="Williams J.G."/>
            <person name="Dear P.H."/>
            <person name="Noegel A.A."/>
            <person name="Barrell B.G."/>
            <person name="Kuspa A."/>
        </authorList>
    </citation>
    <scope>NUCLEOTIDE SEQUENCE [LARGE SCALE GENOMIC DNA]</scope>
    <source>
        <strain>AX4</strain>
    </source>
</reference>